<proteinExistence type="inferred from homology"/>
<feature type="chain" id="PRO_1000089723" description="Recombination protein RecR">
    <location>
        <begin position="1"/>
        <end position="198"/>
    </location>
</feature>
<feature type="domain" description="Toprim" evidence="1">
    <location>
        <begin position="81"/>
        <end position="175"/>
    </location>
</feature>
<feature type="zinc finger region" description="C4-type" evidence="1">
    <location>
        <begin position="58"/>
        <end position="73"/>
    </location>
</feature>
<reference key="1">
    <citation type="journal article" date="2007" name="PLoS ONE">
        <title>Analysis of the neurotoxin complex genes in Clostridium botulinum A1-A4 and B1 strains: BoNT/A3, /Ba4 and /B1 clusters are located within plasmids.</title>
        <authorList>
            <person name="Smith T.J."/>
            <person name="Hill K.K."/>
            <person name="Foley B.T."/>
            <person name="Detter J.C."/>
            <person name="Munk A.C."/>
            <person name="Bruce D.C."/>
            <person name="Doggett N.A."/>
            <person name="Smith L.A."/>
            <person name="Marks J.D."/>
            <person name="Xie G."/>
            <person name="Brettin T.S."/>
        </authorList>
    </citation>
    <scope>NUCLEOTIDE SEQUENCE [LARGE SCALE GENOMIC DNA]</scope>
    <source>
        <strain>Loch Maree / Type A3</strain>
    </source>
</reference>
<keyword id="KW-0227">DNA damage</keyword>
<keyword id="KW-0233">DNA recombination</keyword>
<keyword id="KW-0234">DNA repair</keyword>
<keyword id="KW-0479">Metal-binding</keyword>
<keyword id="KW-0862">Zinc</keyword>
<keyword id="KW-0863">Zinc-finger</keyword>
<evidence type="ECO:0000255" key="1">
    <source>
        <dbReference type="HAMAP-Rule" id="MF_00017"/>
    </source>
</evidence>
<gene>
    <name evidence="1" type="primary">recR</name>
    <name type="ordered locus">CLK_3167</name>
</gene>
<dbReference type="EMBL" id="CP000962">
    <property type="protein sequence ID" value="ACA53889.1"/>
    <property type="molecule type" value="Genomic_DNA"/>
</dbReference>
<dbReference type="RefSeq" id="WP_003359478.1">
    <property type="nucleotide sequence ID" value="NC_010520.1"/>
</dbReference>
<dbReference type="SMR" id="B1KRT7"/>
<dbReference type="GeneID" id="5187947"/>
<dbReference type="KEGG" id="cbl:CLK_3167"/>
<dbReference type="HOGENOM" id="CLU_060739_1_0_9"/>
<dbReference type="GO" id="GO:0003677">
    <property type="term" value="F:DNA binding"/>
    <property type="evidence" value="ECO:0007669"/>
    <property type="project" value="UniProtKB-UniRule"/>
</dbReference>
<dbReference type="GO" id="GO:0008270">
    <property type="term" value="F:zinc ion binding"/>
    <property type="evidence" value="ECO:0007669"/>
    <property type="project" value="UniProtKB-KW"/>
</dbReference>
<dbReference type="GO" id="GO:0006310">
    <property type="term" value="P:DNA recombination"/>
    <property type="evidence" value="ECO:0007669"/>
    <property type="project" value="UniProtKB-UniRule"/>
</dbReference>
<dbReference type="GO" id="GO:0006281">
    <property type="term" value="P:DNA repair"/>
    <property type="evidence" value="ECO:0007669"/>
    <property type="project" value="UniProtKB-UniRule"/>
</dbReference>
<dbReference type="CDD" id="cd01025">
    <property type="entry name" value="TOPRIM_recR"/>
    <property type="match status" value="1"/>
</dbReference>
<dbReference type="Gene3D" id="3.30.60.80">
    <property type="match status" value="1"/>
</dbReference>
<dbReference type="Gene3D" id="3.40.1360.10">
    <property type="match status" value="1"/>
</dbReference>
<dbReference type="Gene3D" id="6.10.250.240">
    <property type="match status" value="1"/>
</dbReference>
<dbReference type="Gene3D" id="1.10.8.420">
    <property type="entry name" value="RecR Domain 1"/>
    <property type="match status" value="1"/>
</dbReference>
<dbReference type="HAMAP" id="MF_00017">
    <property type="entry name" value="RecR"/>
    <property type="match status" value="1"/>
</dbReference>
<dbReference type="InterPro" id="IPR000093">
    <property type="entry name" value="DNA_Rcmb_RecR"/>
</dbReference>
<dbReference type="InterPro" id="IPR023627">
    <property type="entry name" value="Rcmb_RecR"/>
</dbReference>
<dbReference type="InterPro" id="IPR015967">
    <property type="entry name" value="Rcmb_RecR_Znf"/>
</dbReference>
<dbReference type="InterPro" id="IPR006171">
    <property type="entry name" value="TOPRIM_dom"/>
</dbReference>
<dbReference type="InterPro" id="IPR034137">
    <property type="entry name" value="TOPRIM_RecR"/>
</dbReference>
<dbReference type="NCBIfam" id="TIGR00615">
    <property type="entry name" value="recR"/>
    <property type="match status" value="1"/>
</dbReference>
<dbReference type="PANTHER" id="PTHR30446">
    <property type="entry name" value="RECOMBINATION PROTEIN RECR"/>
    <property type="match status" value="1"/>
</dbReference>
<dbReference type="PANTHER" id="PTHR30446:SF0">
    <property type="entry name" value="RECOMBINATION PROTEIN RECR"/>
    <property type="match status" value="1"/>
</dbReference>
<dbReference type="Pfam" id="PF21175">
    <property type="entry name" value="RecR_C"/>
    <property type="match status" value="1"/>
</dbReference>
<dbReference type="Pfam" id="PF21176">
    <property type="entry name" value="RecR_HhH"/>
    <property type="match status" value="1"/>
</dbReference>
<dbReference type="Pfam" id="PF02132">
    <property type="entry name" value="RecR_ZnF"/>
    <property type="match status" value="1"/>
</dbReference>
<dbReference type="Pfam" id="PF13662">
    <property type="entry name" value="Toprim_4"/>
    <property type="match status" value="1"/>
</dbReference>
<dbReference type="SMART" id="SM00493">
    <property type="entry name" value="TOPRIM"/>
    <property type="match status" value="1"/>
</dbReference>
<dbReference type="SUPFAM" id="SSF111304">
    <property type="entry name" value="Recombination protein RecR"/>
    <property type="match status" value="1"/>
</dbReference>
<dbReference type="PROSITE" id="PS01300">
    <property type="entry name" value="RECR"/>
    <property type="match status" value="1"/>
</dbReference>
<dbReference type="PROSITE" id="PS50880">
    <property type="entry name" value="TOPRIM"/>
    <property type="match status" value="1"/>
</dbReference>
<comment type="function">
    <text evidence="1">May play a role in DNA repair. It seems to be involved in an RecBC-independent recombinational process of DNA repair. It may act with RecF and RecO.</text>
</comment>
<comment type="similarity">
    <text evidence="1">Belongs to the RecR family.</text>
</comment>
<sequence length="198" mass="21936">MDFYPIAIEKLIEEFAKLPGIGYKTAQRLTLYVLNLPKEEVKEFSEALVKARGTIKYCSVCGNFTDKDPCAICSNPNRNKSIICVIEQPKDIMSMEKIREYNGVYHVLHGNISPMAGRGPEDIKLKELIRRIDGSVNEVIVATNPNVEGEATAMYISKILKPLGVKVTRIAHGVPVGGDLEYADEVTLAKALEGRIEL</sequence>
<organism>
    <name type="scientific">Clostridium botulinum (strain Loch Maree / Type A3)</name>
    <dbReference type="NCBI Taxonomy" id="498214"/>
    <lineage>
        <taxon>Bacteria</taxon>
        <taxon>Bacillati</taxon>
        <taxon>Bacillota</taxon>
        <taxon>Clostridia</taxon>
        <taxon>Eubacteriales</taxon>
        <taxon>Clostridiaceae</taxon>
        <taxon>Clostridium</taxon>
    </lineage>
</organism>
<protein>
    <recommendedName>
        <fullName evidence="1">Recombination protein RecR</fullName>
    </recommendedName>
</protein>
<name>RECR_CLOBM</name>
<accession>B1KRT7</accession>